<name>CTSRD_BOVIN</name>
<gene>
    <name evidence="2" type="primary">CATSPERD</name>
    <name type="synonym">TMEM146</name>
</gene>
<protein>
    <recommendedName>
        <fullName evidence="2">Cation channel sperm-associated auxiliary subunit delta</fullName>
        <shortName>CatSper-delta</shortName>
        <shortName>CatSperdelta</shortName>
    </recommendedName>
    <alternativeName>
        <fullName>Transmembrane protein 146</fullName>
    </alternativeName>
</protein>
<comment type="function">
    <text evidence="1">Auxiliary component of the CatSper complex, a complex involved in sperm cell hyperactivation. Sperm cell hyperactivation is needed for sperm motility which is essential late in the preparation of sperm for fertilization. Required for CATSPER1 stability before intraflagellar transport and/or incorporation of the CatSper complex channel into the flagellar membrane.</text>
</comment>
<comment type="subunit">
    <text evidence="1 3">Component of the CatSper complex or CatSpermasome composed of the core pore-forming members CATSPER1, CATSPER2, CATSPER3 and CATSPER4 as well as auxiliary members CATSPERB, CATSPERG, CATSPERD, CATSPERE, CATSPERZ, C2CD6/CATSPERT, TMEM249, TMEM262 and EFCAB9 (By similarity). HSPA1 may be an additional auxiliary complex member (By similarity). The core complex members CATSPER1, CATSPER2, CATSPER3 and CATSPER4 form a heterotetrameric channel. The auxiliary CATSPERB, CATSPERG, CATSPERD and CATSPERE subunits form a pavilion-like structure over the pore which stabilizes the complex through interactions with CATSPER4, CATSPER3, CATSPER1 and CATSPER2 respectively. TMEM262/CATSPERH interacts with CATSPERB, further stabilizing the complex. C2CD6/CATSPERT interacts at least with CATSPERD and is required for targeting the CatSper complex in the flagellar membrane (By similarity).</text>
</comment>
<comment type="subcellular location">
    <subcellularLocation>
        <location evidence="1">Cell projection</location>
        <location evidence="1">Cilium</location>
        <location evidence="1">Flagellum membrane</location>
        <topology evidence="4">Single-pass type I membrane protein</topology>
    </subcellularLocation>
    <text evidence="1">Specifically located in the principal piece of sperm tail.</text>
</comment>
<comment type="similarity">
    <text evidence="5">Belongs to the CATSPERD family.</text>
</comment>
<comment type="caution">
    <text evidence="5">In mouse, Slco6c1 is an additional auxiliary subunit of the CatSper complex. It is unclear if the related SLCO6A1 protein performs the same role in non-rodent species.</text>
</comment>
<proteinExistence type="inferred from homology"/>
<reference key="1">
    <citation type="journal article" date="2009" name="Genome Biol.">
        <title>A whole-genome assembly of the domestic cow, Bos taurus.</title>
        <authorList>
            <person name="Zimin A.V."/>
            <person name="Delcher A.L."/>
            <person name="Florea L."/>
            <person name="Kelley D.R."/>
            <person name="Schatz M.C."/>
            <person name="Puiu D."/>
            <person name="Hanrahan F."/>
            <person name="Pertea G."/>
            <person name="Van Tassell C.P."/>
            <person name="Sonstegard T.S."/>
            <person name="Marcais G."/>
            <person name="Roberts M."/>
            <person name="Subramanian P."/>
            <person name="Yorke J.A."/>
            <person name="Salzberg S.L."/>
        </authorList>
    </citation>
    <scope>NUCLEOTIDE SEQUENCE [LARGE SCALE GENOMIC DNA]</scope>
    <source>
        <strain>Hereford</strain>
    </source>
</reference>
<evidence type="ECO:0000250" key="1">
    <source>
        <dbReference type="UniProtKB" id="E9Q9F6"/>
    </source>
</evidence>
<evidence type="ECO:0000250" key="2">
    <source>
        <dbReference type="UniProtKB" id="Q86XM0"/>
    </source>
</evidence>
<evidence type="ECO:0000250" key="3">
    <source>
        <dbReference type="UniProtKB" id="Q91ZR5"/>
    </source>
</evidence>
<evidence type="ECO:0000255" key="4"/>
<evidence type="ECO:0000305" key="5"/>
<keyword id="KW-1003">Cell membrane</keyword>
<keyword id="KW-0966">Cell projection</keyword>
<keyword id="KW-0969">Cilium</keyword>
<keyword id="KW-0217">Developmental protein</keyword>
<keyword id="KW-0221">Differentiation</keyword>
<keyword id="KW-1015">Disulfide bond</keyword>
<keyword id="KW-0282">Flagellum</keyword>
<keyword id="KW-0325">Glycoprotein</keyword>
<keyword id="KW-0472">Membrane</keyword>
<keyword id="KW-1185">Reference proteome</keyword>
<keyword id="KW-0732">Signal</keyword>
<keyword id="KW-0744">Spermatogenesis</keyword>
<keyword id="KW-0812">Transmembrane</keyword>
<keyword id="KW-1133">Transmembrane helix</keyword>
<accession>E1B9E5</accession>
<sequence length="781" mass="88415">MLVLMLVVATTFRLCPLVKARPLCRIRTLRTGKVFPVEEKIQGDRLYFSSGKTHLIKHPCKKNLALYLGRQIFLTKDTFESSLIPFSIPTSMQVGTPEVTSAHFAGSVLLLVVNQKVYVYDYEANFWTASTGIQHPVSHVSGDNCCYSGNSFCMDISNSVFAYLRGDQVSQANIYFSNSRGYRFQKYTQERRAELVGTFGGIFSFHSLSQVGLLLVDEQMAMFSYSDHPLNRSFGLPFDYDRALDILIAPGQKGILIFWSEKNLLVSRNSGQLVESVQVREGQRILYNSIVKANVTIHSVAANENELAVLTEENNLYYGSLGIQSSSLIKFADQNIWSQEAVLMFTDVGMLEILTPLRDVLFPAFDFQKCRLNIQALLMDPQLQAGVCKVELLQGEFENKMYTIDMNSQLELTALMIPRPGMLPVPLVSVSNPHSLGLQAVICEDGYTYDGNTKHRLNISLKQQHHWGRADPNFTSSIKRPTISTITLDIANKEISCVDLKPLTALISVGCDLEKKIVIQNELSACYHGVLDPVALQDNYSYIIEREAYDPNFQGQQAKKDLEVHYPYEKLGCPLLAYYDIPWKPVVELWREGKFQEVVEAEYVLLEMNGLFTYTYSLTASTAGCSAQPQNWTTITKMAGDTAPFSWDRENYISCHDPNYHEPLRWPDVPYQILGGQTENKVVFDQRNGIYIFFISIVDPSYSYCRLETTFSVYVYGAFPLSIFPPEITIVLLTAATLLSIWLAYMIPQLLHTEQGLEGNGFWVRLYQRCRKSCACLWGRC</sequence>
<feature type="signal peptide" evidence="4">
    <location>
        <begin position="1"/>
        <end position="20"/>
    </location>
</feature>
<feature type="chain" id="PRO_0000416883" description="Cation channel sperm-associated auxiliary subunit delta">
    <location>
        <begin position="21"/>
        <end position="781"/>
    </location>
</feature>
<feature type="topological domain" description="Extracellular" evidence="1">
    <location>
        <begin position="21"/>
        <end position="725"/>
    </location>
</feature>
<feature type="transmembrane region" description="Helical" evidence="1">
    <location>
        <begin position="726"/>
        <end position="749"/>
    </location>
</feature>
<feature type="topological domain" description="Cytoplasmic" evidence="1">
    <location>
        <begin position="750"/>
        <end position="781"/>
    </location>
</feature>
<feature type="glycosylation site" description="N-linked (GlcNAc...) asparagine" evidence="4">
    <location>
        <position position="231"/>
    </location>
</feature>
<feature type="glycosylation site" description="N-linked (GlcNAc...) asparagine" evidence="4">
    <location>
        <position position="294"/>
    </location>
</feature>
<feature type="glycosylation site" description="N-linked (GlcNAc...) asparagine" evidence="4">
    <location>
        <position position="458"/>
    </location>
</feature>
<feature type="glycosylation site" description="N-linked (GlcNAc...) asparagine" evidence="4">
    <location>
        <position position="473"/>
    </location>
</feature>
<feature type="glycosylation site" description="N-linked (GlcNAc...) asparagine" evidence="4">
    <location>
        <position position="539"/>
    </location>
</feature>
<feature type="glycosylation site" description="N-linked (GlcNAc...) asparagine" evidence="4">
    <location>
        <position position="631"/>
    </location>
</feature>
<feature type="disulfide bond" evidence="1">
    <location>
        <begin position="24"/>
        <end position="370"/>
    </location>
</feature>
<feature type="disulfide bond" evidence="1">
    <location>
        <begin position="60"/>
        <end position="146"/>
    </location>
</feature>
<feature type="disulfide bond" evidence="1">
    <location>
        <begin position="145"/>
        <end position="153"/>
    </location>
</feature>
<feature type="disulfide bond" evidence="1">
    <location>
        <begin position="388"/>
        <end position="497"/>
    </location>
</feature>
<feature type="disulfide bond" evidence="1">
    <location>
        <begin position="511"/>
        <end position="705"/>
    </location>
</feature>
<feature type="disulfide bond" evidence="1">
    <location>
        <begin position="526"/>
        <end position="573"/>
    </location>
</feature>
<feature type="disulfide bond" evidence="1">
    <location>
        <begin position="625"/>
        <end position="655"/>
    </location>
</feature>
<dbReference type="EMBL" id="DAAA02019576">
    <property type="status" value="NOT_ANNOTATED_CDS"/>
    <property type="molecule type" value="Genomic_DNA"/>
</dbReference>
<dbReference type="SMR" id="E1B9E5"/>
<dbReference type="FunCoup" id="E1B9E5">
    <property type="interactions" value="7"/>
</dbReference>
<dbReference type="STRING" id="9913.ENSBTAP00000002352"/>
<dbReference type="GlyCosmos" id="E1B9E5">
    <property type="glycosylation" value="6 sites, No reported glycans"/>
</dbReference>
<dbReference type="GlyGen" id="E1B9E5">
    <property type="glycosylation" value="6 sites"/>
</dbReference>
<dbReference type="PaxDb" id="9913-ENSBTAP00000002352"/>
<dbReference type="eggNOG" id="ENOG502QSPE">
    <property type="taxonomic scope" value="Eukaryota"/>
</dbReference>
<dbReference type="HOGENOM" id="CLU_019182_0_0_1"/>
<dbReference type="InParanoid" id="E1B9E5"/>
<dbReference type="OrthoDB" id="8646292at2759"/>
<dbReference type="TreeFam" id="TF337973"/>
<dbReference type="Proteomes" id="UP000009136">
    <property type="component" value="Unplaced"/>
</dbReference>
<dbReference type="GO" id="GO:0036128">
    <property type="term" value="C:CatSper complex"/>
    <property type="evidence" value="ECO:0000250"/>
    <property type="project" value="UniProtKB"/>
</dbReference>
<dbReference type="GO" id="GO:0097228">
    <property type="term" value="C:sperm principal piece"/>
    <property type="evidence" value="ECO:0000250"/>
    <property type="project" value="UniProtKB"/>
</dbReference>
<dbReference type="GO" id="GO:0030317">
    <property type="term" value="P:flagellated sperm motility"/>
    <property type="evidence" value="ECO:0000250"/>
    <property type="project" value="UniProtKB"/>
</dbReference>
<dbReference type="GO" id="GO:0048240">
    <property type="term" value="P:sperm capacitation"/>
    <property type="evidence" value="ECO:0000250"/>
    <property type="project" value="UniProtKB"/>
</dbReference>
<dbReference type="GO" id="GO:0007283">
    <property type="term" value="P:spermatogenesis"/>
    <property type="evidence" value="ECO:0000250"/>
    <property type="project" value="UniProtKB"/>
</dbReference>
<dbReference type="InterPro" id="IPR028751">
    <property type="entry name" value="CATSPERD/E"/>
</dbReference>
<dbReference type="InterPro" id="IPR053814">
    <property type="entry name" value="CATSPERD/E_C"/>
</dbReference>
<dbReference type="InterPro" id="IPR053813">
    <property type="entry name" value="CATSPERD_b-prop"/>
</dbReference>
<dbReference type="InterPro" id="IPR055451">
    <property type="entry name" value="Ig-like_CATSPERD"/>
</dbReference>
<dbReference type="PANTHER" id="PTHR33722:SF1">
    <property type="entry name" value="CATION CHANNEL SPERM-ASSOCIATED AUXILIARY SUBUNIT DELTA"/>
    <property type="match status" value="1"/>
</dbReference>
<dbReference type="PANTHER" id="PTHR33722">
    <property type="entry name" value="CATION CHANNEL SPERM-ASSOCIATED PROTEIN SUBUNIT DELTA-RELATED"/>
    <property type="match status" value="1"/>
</dbReference>
<dbReference type="Pfam" id="PF15020">
    <property type="entry name" value="Beta-prop_CATSPERD"/>
    <property type="match status" value="1"/>
</dbReference>
<dbReference type="Pfam" id="PF22850">
    <property type="entry name" value="CATSPERD-E_C"/>
    <property type="match status" value="1"/>
</dbReference>
<dbReference type="Pfam" id="PF23747">
    <property type="entry name" value="Ig-like_CATSPERD"/>
    <property type="match status" value="1"/>
</dbReference>
<organism>
    <name type="scientific">Bos taurus</name>
    <name type="common">Bovine</name>
    <dbReference type="NCBI Taxonomy" id="9913"/>
    <lineage>
        <taxon>Eukaryota</taxon>
        <taxon>Metazoa</taxon>
        <taxon>Chordata</taxon>
        <taxon>Craniata</taxon>
        <taxon>Vertebrata</taxon>
        <taxon>Euteleostomi</taxon>
        <taxon>Mammalia</taxon>
        <taxon>Eutheria</taxon>
        <taxon>Laurasiatheria</taxon>
        <taxon>Artiodactyla</taxon>
        <taxon>Ruminantia</taxon>
        <taxon>Pecora</taxon>
        <taxon>Bovidae</taxon>
        <taxon>Bovinae</taxon>
        <taxon>Bos</taxon>
    </lineage>
</organism>